<name>TEY_DROME</name>
<evidence type="ECO:0000256" key="1">
    <source>
        <dbReference type="SAM" id="MobiDB-lite"/>
    </source>
</evidence>
<evidence type="ECO:0000269" key="2">
    <source>
    </source>
</evidence>
<evidence type="ECO:0000269" key="3">
    <source>
    </source>
</evidence>
<evidence type="ECO:0000305" key="4"/>
<evidence type="ECO:0000312" key="5">
    <source>
        <dbReference type="EMBL" id="AFH89829.1"/>
    </source>
</evidence>
<evidence type="ECO:0000312" key="6">
    <source>
        <dbReference type="FlyBase" id="FBgn0036899"/>
    </source>
</evidence>
<evidence type="ECO:0000312" key="7">
    <source>
        <dbReference type="Proteomes" id="UP000000803"/>
    </source>
</evidence>
<sequence>MESNAFGSSHLPSQALVVLSEAASGLHEALRGQRPFPSRVIPFDFPLLQLPDAKDLHNMSLVGNYFNPHLLLNHGMLVANGAAAAAAAAGAGPASYFASDRSPLGKPSVLSNFSLPSAFSPPKYIGISLDQNLFNGSESFRTDSASPTCTSHESMEGSQDYDAVEKGESPRSNNSQDPRDLRHLHNAGKSHQALATSSSASSSSSSSCSTSNPAISTATSSVAVSMASHLAASSPHHHPHTHAHSHPHPLAHPHAHSHHHVGHHVGAPPVSTAVTTHHHMAHPHPLSHHHAAHHAALASLSMAGLRAVPGGLSLVSGLQAAAAGGAIPEMCPVCGLKLSAEEWHTHFLTELDRLYKLSAGFERASLQATYMFAPPCPAQENAIRTSHNRWETFQRIRNNRQNRLRLKVRKRKYGEMYMMESLYCSSCPICKRKYALETGKIPPEDDAKSQEEIETVDVESCNDEVPDSGSELATPSSGSSGTVMPPSSMHNSNSQPGKLDGILYRTGCVLSQKDPHPDEHDVSTNVTTASSSSWPGEAPTQAHISVKTVSELSSTTHHYYNADSCGVGVNDTNSSSSTHNNGGGSNKDLMMDTASCQNDSDEDVIVDDDDTVKLTSKINYGKIQRRQDEQNVGSSRSLENISPVEERPRSEPQVSSTEPGPMDISHNNNNNNNNNNNNSNSNNNNNPSTKYAESMENSLSQLSSMGVPGLTQLDTKA</sequence>
<proteinExistence type="evidence at protein level"/>
<gene>
    <name evidence="6" type="primary">tey</name>
    <name evidence="6" type="ORF">CG8780</name>
</gene>
<feature type="chain" id="PRO_0000436309" description="Protein Teyrha-meyrha">
    <location>
        <begin position="1"/>
        <end position="717"/>
    </location>
</feature>
<feature type="region of interest" description="Disordered" evidence="1">
    <location>
        <begin position="140"/>
        <end position="214"/>
    </location>
</feature>
<feature type="region of interest" description="Disordered" evidence="1">
    <location>
        <begin position="229"/>
        <end position="270"/>
    </location>
</feature>
<feature type="region of interest" description="Disordered" evidence="1">
    <location>
        <begin position="440"/>
        <end position="498"/>
    </location>
</feature>
<feature type="region of interest" description="Disordered" evidence="1">
    <location>
        <begin position="511"/>
        <end position="539"/>
    </location>
</feature>
<feature type="region of interest" description="Disordered" evidence="1">
    <location>
        <begin position="563"/>
        <end position="594"/>
    </location>
</feature>
<feature type="region of interest" description="Disordered" evidence="1">
    <location>
        <begin position="624"/>
        <end position="717"/>
    </location>
</feature>
<feature type="compositionally biased region" description="Polar residues" evidence="1">
    <location>
        <begin position="140"/>
        <end position="152"/>
    </location>
</feature>
<feature type="compositionally biased region" description="Low complexity" evidence="1">
    <location>
        <begin position="195"/>
        <end position="214"/>
    </location>
</feature>
<feature type="compositionally biased region" description="Basic residues" evidence="1">
    <location>
        <begin position="235"/>
        <end position="263"/>
    </location>
</feature>
<feature type="compositionally biased region" description="Basic and acidic residues" evidence="1">
    <location>
        <begin position="442"/>
        <end position="451"/>
    </location>
</feature>
<feature type="compositionally biased region" description="Acidic residues" evidence="1">
    <location>
        <begin position="452"/>
        <end position="466"/>
    </location>
</feature>
<feature type="compositionally biased region" description="Polar residues" evidence="1">
    <location>
        <begin position="471"/>
        <end position="482"/>
    </location>
</feature>
<feature type="compositionally biased region" description="Basic and acidic residues" evidence="1">
    <location>
        <begin position="513"/>
        <end position="522"/>
    </location>
</feature>
<feature type="compositionally biased region" description="Low complexity" evidence="1">
    <location>
        <begin position="523"/>
        <end position="533"/>
    </location>
</feature>
<feature type="compositionally biased region" description="Low complexity" evidence="1">
    <location>
        <begin position="570"/>
        <end position="580"/>
    </location>
</feature>
<feature type="compositionally biased region" description="Polar residues" evidence="1">
    <location>
        <begin position="630"/>
        <end position="640"/>
    </location>
</feature>
<feature type="compositionally biased region" description="Low complexity" evidence="1">
    <location>
        <begin position="667"/>
        <end position="686"/>
    </location>
</feature>
<feature type="compositionally biased region" description="Polar residues" evidence="1">
    <location>
        <begin position="687"/>
        <end position="704"/>
    </location>
</feature>
<comment type="function">
    <text evidence="2 3">Required for the correct synaptic targeting of motoneurons RP5 and V to muscle 12 (M12) (PubMed:20504957). May be involved in the negative regulation of Tl in M12 (PubMed:20504957). Involved in the correct patterning of veins in the proximal (costal) region of the wing blade (PubMed:17028348).</text>
</comment>
<comment type="subcellular location">
    <subcellularLocation>
        <location evidence="3">Nucleus</location>
    </subcellularLocation>
</comment>
<comment type="tissue specificity">
    <text evidence="3">In embryos, expressed specifically in M12 (at protein level).</text>
</comment>
<comment type="disruption phenotype">
    <text evidence="2 3">In embryos, M12 position is closer to the ventral nerve cord and situated ventral to muscle 13 (M13) and external to muscle 6/7 (PubMed:20504957). The longitudinal orientation of M12 is also oblique probably due to an alteration in the muscle attachment sites (PubMed:20504957). Also displays a reduced number of synaptic sites on M12. No effect on muscle fiber size (PubMed:20504957). RNAi-mediated knockdown results in the fusion of the costal vein with the L1 vein in the developing wing, producing an adult wing that has a continuous wing margin with no separation between the end of the costal and L1 veins (PubMed:17028348). The medial and distal regions of the costal vein are also fused (PubMed:17028348). Thickening of the costal vein often occurs, and sometimes spans the region between the costal and subcostal veins (PubMed:17028348).</text>
</comment>
<keyword id="KW-0539">Nucleus</keyword>
<keyword id="KW-1185">Reference proteome</keyword>
<organism evidence="7">
    <name type="scientific">Drosophila melanogaster</name>
    <name type="common">Fruit fly</name>
    <dbReference type="NCBI Taxonomy" id="7227"/>
    <lineage>
        <taxon>Eukaryota</taxon>
        <taxon>Metazoa</taxon>
        <taxon>Ecdysozoa</taxon>
        <taxon>Arthropoda</taxon>
        <taxon>Hexapoda</taxon>
        <taxon>Insecta</taxon>
        <taxon>Pterygota</taxon>
        <taxon>Neoptera</taxon>
        <taxon>Endopterygota</taxon>
        <taxon>Diptera</taxon>
        <taxon>Brachycera</taxon>
        <taxon>Muscomorpha</taxon>
        <taxon>Ephydroidea</taxon>
        <taxon>Drosophilidae</taxon>
        <taxon>Drosophila</taxon>
        <taxon>Sophophora</taxon>
    </lineage>
</organism>
<protein>
    <recommendedName>
        <fullName evidence="6">Protein Teyrha-meyrha</fullName>
    </recommendedName>
</protein>
<accession>Q9VW27</accession>
<reference evidence="7" key="1">
    <citation type="journal article" date="2000" name="Science">
        <title>The genome sequence of Drosophila melanogaster.</title>
        <authorList>
            <person name="Adams M.D."/>
            <person name="Celniker S.E."/>
            <person name="Holt R.A."/>
            <person name="Evans C.A."/>
            <person name="Gocayne J.D."/>
            <person name="Amanatides P.G."/>
            <person name="Scherer S.E."/>
            <person name="Li P.W."/>
            <person name="Hoskins R.A."/>
            <person name="Galle R.F."/>
            <person name="George R.A."/>
            <person name="Lewis S.E."/>
            <person name="Richards S."/>
            <person name="Ashburner M."/>
            <person name="Henderson S.N."/>
            <person name="Sutton G.G."/>
            <person name="Wortman J.R."/>
            <person name="Yandell M.D."/>
            <person name="Zhang Q."/>
            <person name="Chen L.X."/>
            <person name="Brandon R.C."/>
            <person name="Rogers Y.-H.C."/>
            <person name="Blazej R.G."/>
            <person name="Champe M."/>
            <person name="Pfeiffer B.D."/>
            <person name="Wan K.H."/>
            <person name="Doyle C."/>
            <person name="Baxter E.G."/>
            <person name="Helt G."/>
            <person name="Nelson C.R."/>
            <person name="Miklos G.L.G."/>
            <person name="Abril J.F."/>
            <person name="Agbayani A."/>
            <person name="An H.-J."/>
            <person name="Andrews-Pfannkoch C."/>
            <person name="Baldwin D."/>
            <person name="Ballew R.M."/>
            <person name="Basu A."/>
            <person name="Baxendale J."/>
            <person name="Bayraktaroglu L."/>
            <person name="Beasley E.M."/>
            <person name="Beeson K.Y."/>
            <person name="Benos P.V."/>
            <person name="Berman B.P."/>
            <person name="Bhandari D."/>
            <person name="Bolshakov S."/>
            <person name="Borkova D."/>
            <person name="Botchan M.R."/>
            <person name="Bouck J."/>
            <person name="Brokstein P."/>
            <person name="Brottier P."/>
            <person name="Burtis K.C."/>
            <person name="Busam D.A."/>
            <person name="Butler H."/>
            <person name="Cadieu E."/>
            <person name="Center A."/>
            <person name="Chandra I."/>
            <person name="Cherry J.M."/>
            <person name="Cawley S."/>
            <person name="Dahlke C."/>
            <person name="Davenport L.B."/>
            <person name="Davies P."/>
            <person name="de Pablos B."/>
            <person name="Delcher A."/>
            <person name="Deng Z."/>
            <person name="Mays A.D."/>
            <person name="Dew I."/>
            <person name="Dietz S.M."/>
            <person name="Dodson K."/>
            <person name="Doup L.E."/>
            <person name="Downes M."/>
            <person name="Dugan-Rocha S."/>
            <person name="Dunkov B.C."/>
            <person name="Dunn P."/>
            <person name="Durbin K.J."/>
            <person name="Evangelista C.C."/>
            <person name="Ferraz C."/>
            <person name="Ferriera S."/>
            <person name="Fleischmann W."/>
            <person name="Fosler C."/>
            <person name="Gabrielian A.E."/>
            <person name="Garg N.S."/>
            <person name="Gelbart W.M."/>
            <person name="Glasser K."/>
            <person name="Glodek A."/>
            <person name="Gong F."/>
            <person name="Gorrell J.H."/>
            <person name="Gu Z."/>
            <person name="Guan P."/>
            <person name="Harris M."/>
            <person name="Harris N.L."/>
            <person name="Harvey D.A."/>
            <person name="Heiman T.J."/>
            <person name="Hernandez J.R."/>
            <person name="Houck J."/>
            <person name="Hostin D."/>
            <person name="Houston K.A."/>
            <person name="Howland T.J."/>
            <person name="Wei M.-H."/>
            <person name="Ibegwam C."/>
            <person name="Jalali M."/>
            <person name="Kalush F."/>
            <person name="Karpen G.H."/>
            <person name="Ke Z."/>
            <person name="Kennison J.A."/>
            <person name="Ketchum K.A."/>
            <person name="Kimmel B.E."/>
            <person name="Kodira C.D."/>
            <person name="Kraft C.L."/>
            <person name="Kravitz S."/>
            <person name="Kulp D."/>
            <person name="Lai Z."/>
            <person name="Lasko P."/>
            <person name="Lei Y."/>
            <person name="Levitsky A.A."/>
            <person name="Li J.H."/>
            <person name="Li Z."/>
            <person name="Liang Y."/>
            <person name="Lin X."/>
            <person name="Liu X."/>
            <person name="Mattei B."/>
            <person name="McIntosh T.C."/>
            <person name="McLeod M.P."/>
            <person name="McPherson D."/>
            <person name="Merkulov G."/>
            <person name="Milshina N.V."/>
            <person name="Mobarry C."/>
            <person name="Morris J."/>
            <person name="Moshrefi A."/>
            <person name="Mount S.M."/>
            <person name="Moy M."/>
            <person name="Murphy B."/>
            <person name="Murphy L."/>
            <person name="Muzny D.M."/>
            <person name="Nelson D.L."/>
            <person name="Nelson D.R."/>
            <person name="Nelson K.A."/>
            <person name="Nixon K."/>
            <person name="Nusskern D.R."/>
            <person name="Pacleb J.M."/>
            <person name="Palazzolo M."/>
            <person name="Pittman G.S."/>
            <person name="Pan S."/>
            <person name="Pollard J."/>
            <person name="Puri V."/>
            <person name="Reese M.G."/>
            <person name="Reinert K."/>
            <person name="Remington K."/>
            <person name="Saunders R.D.C."/>
            <person name="Scheeler F."/>
            <person name="Shen H."/>
            <person name="Shue B.C."/>
            <person name="Siden-Kiamos I."/>
            <person name="Simpson M."/>
            <person name="Skupski M.P."/>
            <person name="Smith T.J."/>
            <person name="Spier E."/>
            <person name="Spradling A.C."/>
            <person name="Stapleton M."/>
            <person name="Strong R."/>
            <person name="Sun E."/>
            <person name="Svirskas R."/>
            <person name="Tector C."/>
            <person name="Turner R."/>
            <person name="Venter E."/>
            <person name="Wang A.H."/>
            <person name="Wang X."/>
            <person name="Wang Z.-Y."/>
            <person name="Wassarman D.A."/>
            <person name="Weinstock G.M."/>
            <person name="Weissenbach J."/>
            <person name="Williams S.M."/>
            <person name="Woodage T."/>
            <person name="Worley K.C."/>
            <person name="Wu D."/>
            <person name="Yang S."/>
            <person name="Yao Q.A."/>
            <person name="Ye J."/>
            <person name="Yeh R.-F."/>
            <person name="Zaveri J.S."/>
            <person name="Zhan M."/>
            <person name="Zhang G."/>
            <person name="Zhao Q."/>
            <person name="Zheng L."/>
            <person name="Zheng X.H."/>
            <person name="Zhong F.N."/>
            <person name="Zhong W."/>
            <person name="Zhou X."/>
            <person name="Zhu S.C."/>
            <person name="Zhu X."/>
            <person name="Smith H.O."/>
            <person name="Gibbs R.A."/>
            <person name="Myers E.W."/>
            <person name="Rubin G.M."/>
            <person name="Venter J.C."/>
        </authorList>
    </citation>
    <scope>NUCLEOTIDE SEQUENCE [LARGE SCALE GENOMIC DNA]</scope>
    <source>
        <strain evidence="7">Berkeley</strain>
    </source>
</reference>
<reference evidence="7" key="2">
    <citation type="journal article" date="2002" name="Genome Biol.">
        <title>Annotation of the Drosophila melanogaster euchromatic genome: a systematic review.</title>
        <authorList>
            <person name="Misra S."/>
            <person name="Crosby M.A."/>
            <person name="Mungall C.J."/>
            <person name="Matthews B.B."/>
            <person name="Campbell K.S."/>
            <person name="Hradecky P."/>
            <person name="Huang Y."/>
            <person name="Kaminker J.S."/>
            <person name="Millburn G.H."/>
            <person name="Prochnik S.E."/>
            <person name="Smith C.D."/>
            <person name="Tupy J.L."/>
            <person name="Whitfield E.J."/>
            <person name="Bayraktaroglu L."/>
            <person name="Berman B.P."/>
            <person name="Bettencourt B.R."/>
            <person name="Celniker S.E."/>
            <person name="de Grey A.D.N.J."/>
            <person name="Drysdale R.A."/>
            <person name="Harris N.L."/>
            <person name="Richter J."/>
            <person name="Russo S."/>
            <person name="Schroeder A.J."/>
            <person name="Shu S.Q."/>
            <person name="Stapleton M."/>
            <person name="Yamada C."/>
            <person name="Ashburner M."/>
            <person name="Gelbart W.M."/>
            <person name="Rubin G.M."/>
            <person name="Lewis S.E."/>
        </authorList>
    </citation>
    <scope>GENOME REANNOTATION</scope>
    <source>
        <strain evidence="7">Berkeley</strain>
    </source>
</reference>
<reference evidence="5" key="3">
    <citation type="submission" date="2012-04" db="EMBL/GenBank/DDBJ databases">
        <authorList>
            <person name="Carlson J."/>
            <person name="Booth B."/>
            <person name="Frise E."/>
            <person name="Park S."/>
            <person name="Wan K."/>
            <person name="Yu C."/>
            <person name="Celniker S."/>
        </authorList>
    </citation>
    <scope>NUCLEOTIDE SEQUENCE [MRNA]</scope>
</reference>
<reference evidence="4" key="4">
    <citation type="journal article" date="2006" name="Genetics">
        <title>Functional analysis of genes differentially expressed in the Drosophila wing disc: role of transcripts enriched in the wing region.</title>
        <authorList>
            <person name="Jacobsen T.L."/>
            <person name="Cain D."/>
            <person name="Paul L."/>
            <person name="Justiniano S."/>
            <person name="Alli A."/>
            <person name="Mullins J.S."/>
            <person name="Wang C.P."/>
            <person name="Butchar J.P."/>
            <person name="Simcox A."/>
        </authorList>
    </citation>
    <scope>FUNCTION</scope>
    <scope>DISRUPTION PHENOTYPE</scope>
</reference>
<reference evidence="4" key="5">
    <citation type="journal article" date="2010" name="Development">
        <title>Drosophila Tey represses transcription of the repulsive cue Toll and generates neuromuscular target specificity.</title>
        <authorList>
            <person name="Inaki M."/>
            <person name="Shinza-Kameda M."/>
            <person name="Ismat A."/>
            <person name="Frasch M."/>
            <person name="Nose A."/>
        </authorList>
    </citation>
    <scope>FUNCTION</scope>
    <scope>SUBCELLULAR LOCATION</scope>
    <scope>TISSUE SPECIFICITY</scope>
    <scope>DISRUPTION PHENOTYPE</scope>
</reference>
<dbReference type="EMBL" id="AE014296">
    <property type="protein sequence ID" value="AAF49126.2"/>
    <property type="molecule type" value="Genomic_DNA"/>
</dbReference>
<dbReference type="EMBL" id="BT133456">
    <property type="protein sequence ID" value="AFH89829.1"/>
    <property type="molecule type" value="mRNA"/>
</dbReference>
<dbReference type="RefSeq" id="NP_649140.1">
    <property type="nucleotide sequence ID" value="NM_140883.2"/>
</dbReference>
<dbReference type="FunCoup" id="Q9VW27">
    <property type="interactions" value="159"/>
</dbReference>
<dbReference type="IntAct" id="Q9VW27">
    <property type="interactions" value="2"/>
</dbReference>
<dbReference type="STRING" id="7227.FBpp0271915"/>
<dbReference type="GlyGen" id="Q9VW27">
    <property type="glycosylation" value="1 site"/>
</dbReference>
<dbReference type="PaxDb" id="7227-FBpp0271915"/>
<dbReference type="EnsemblMetazoa" id="FBtr0074960">
    <property type="protein sequence ID" value="FBpp0074728"/>
    <property type="gene ID" value="FBgn0036899"/>
</dbReference>
<dbReference type="GeneID" id="40146"/>
<dbReference type="KEGG" id="dme:Dmel_CG8780"/>
<dbReference type="UCSC" id="CG8780-RA">
    <property type="organism name" value="d. melanogaster"/>
</dbReference>
<dbReference type="AGR" id="FB:FBgn0036899"/>
<dbReference type="CTD" id="40146"/>
<dbReference type="FlyBase" id="FBgn0036899">
    <property type="gene designation" value="tey"/>
</dbReference>
<dbReference type="VEuPathDB" id="VectorBase:FBgn0036899"/>
<dbReference type="eggNOG" id="ENOG502QR1N">
    <property type="taxonomic scope" value="Eukaryota"/>
</dbReference>
<dbReference type="GeneTree" id="ENSGT00390000016573"/>
<dbReference type="HOGENOM" id="CLU_362599_0_0_1"/>
<dbReference type="InParanoid" id="Q9VW27"/>
<dbReference type="OrthoDB" id="6270329at2759"/>
<dbReference type="BioGRID-ORCS" id="40146">
    <property type="hits" value="0 hits in 1 CRISPR screen"/>
</dbReference>
<dbReference type="GenomeRNAi" id="40146"/>
<dbReference type="PRO" id="PR:Q9VW27"/>
<dbReference type="Proteomes" id="UP000000803">
    <property type="component" value="Chromosome 3L"/>
</dbReference>
<dbReference type="Bgee" id="FBgn0036899">
    <property type="expression patterns" value="Expressed in epithelial cell in haltere and 34 other cell types or tissues"/>
</dbReference>
<dbReference type="ExpressionAtlas" id="Q9VW27">
    <property type="expression patterns" value="baseline and differential"/>
</dbReference>
<dbReference type="GO" id="GO:0005634">
    <property type="term" value="C:nucleus"/>
    <property type="evidence" value="ECO:0000314"/>
    <property type="project" value="FlyBase"/>
</dbReference>
<dbReference type="GO" id="GO:0061630">
    <property type="term" value="F:ubiquitin protein ligase activity"/>
    <property type="evidence" value="ECO:0000318"/>
    <property type="project" value="GO_Central"/>
</dbReference>
<dbReference type="GO" id="GO:0045892">
    <property type="term" value="P:negative regulation of DNA-templated transcription"/>
    <property type="evidence" value="ECO:0000315"/>
    <property type="project" value="FlyBase"/>
</dbReference>
<dbReference type="GO" id="GO:0016567">
    <property type="term" value="P:protein ubiquitination"/>
    <property type="evidence" value="ECO:0000318"/>
    <property type="project" value="GO_Central"/>
</dbReference>
<dbReference type="GO" id="GO:0008039">
    <property type="term" value="P:synaptic target recognition"/>
    <property type="evidence" value="ECO:0000315"/>
    <property type="project" value="FlyBase"/>
</dbReference>
<dbReference type="InterPro" id="IPR052443">
    <property type="entry name" value="E3_ubiq-ligase_RNF220-like"/>
</dbReference>
<dbReference type="InterPro" id="IPR031824">
    <property type="entry name" value="RNF220_mid"/>
</dbReference>
<dbReference type="PANTHER" id="PTHR13459">
    <property type="entry name" value="E3 UBIQUITIN-PROTEIN LIGASE RNF220 ISOFORM X1"/>
    <property type="match status" value="1"/>
</dbReference>
<dbReference type="PANTHER" id="PTHR13459:SF1">
    <property type="entry name" value="E3 UBIQUITIN-PROTEIN LIGASE RNF220 ISOFORM X1"/>
    <property type="match status" value="1"/>
</dbReference>
<dbReference type="Pfam" id="PF15926">
    <property type="entry name" value="RNF220"/>
    <property type="match status" value="1"/>
</dbReference>